<accession>P14250</accession>
<accession>C9RK83</accession>
<accession>D9S6Q5</accession>
<sequence length="658" mass="73424">MQLKNFYPKMSVLGIATVMALTACGDENTQALFANNPVPGAENQVPVSSSDMSPTSSDAVIDPTSSSAAVVDPSTLPAEGPITMPEGLGTLVDDFEDGDNLSKIGDYWYTYNDNDNGGASIITTPLNEEENIIPGRVNNGSNYALQVNYTLDRGDYEYDPYVGWGVQVAPDEANGHFGGLTYWYKGGAHEVHIEITDVEDYDVHLAKFPASRTWKQAVVRFKDLVQGGWGKEIPFDAKHIMAISFQAKGNKSKLVTDSLFIDNIYLQDSSEVEKDQPDMEIKDPVIPVVEFTEAEITVTNPLQEKAMKYLNKGVNFTNWLENADGKFKSFELGESDVKILADNGFKSLRLPIDLDLYATNRDAFIAGTDTELKFDDDTLFLVLDSFVEWTAKYNMSFVIDYHEYDNSYNTTSAKDPNYIKMMAETWKHVAAHYAESPREDLFFELLNEPDMSDGKVTAATWTTAAQAMIDAIRTVDTKHTILFGDAQWYSITLLAKRTPFTDDNIIYVIHTYEPFAFTHQGGSWTDYATIHDIPFPYDPAKWSTVSGDFGVNKSTKSYVKTNIKNYYKTGSKEAILEQILKAKKWAATNNVPVIINEFGALNLRSTAESRLNYLTAMREICDTLQIPWTHWGYTGNFSVIENGKLIEGLDKALGVGSK</sequence>
<organism>
    <name type="scientific">Fibrobacter succinogenes (strain ATCC 19169 / S85)</name>
    <dbReference type="NCBI Taxonomy" id="59374"/>
    <lineage>
        <taxon>Bacteria</taxon>
        <taxon>Pseudomonadati</taxon>
        <taxon>Fibrobacterota</taxon>
        <taxon>Fibrobacteria</taxon>
        <taxon>Fibrobacterales</taxon>
        <taxon>Fibrobacteraceae</taxon>
        <taxon>Fibrobacter</taxon>
    </lineage>
</organism>
<keyword id="KW-0119">Carbohydrate metabolism</keyword>
<keyword id="KW-0136">Cellulose degradation</keyword>
<keyword id="KW-0903">Direct protein sequencing</keyword>
<keyword id="KW-0326">Glycosidase</keyword>
<keyword id="KW-0378">Hydrolase</keyword>
<keyword id="KW-0449">Lipoprotein</keyword>
<keyword id="KW-0472">Membrane</keyword>
<keyword id="KW-0564">Palmitate</keyword>
<keyword id="KW-0624">Polysaccharide degradation</keyword>
<keyword id="KW-0732">Signal</keyword>
<keyword id="KW-0865">Zymogen</keyword>
<evidence type="ECO:0000250" key="1"/>
<evidence type="ECO:0000255" key="2"/>
<evidence type="ECO:0000255" key="3">
    <source>
        <dbReference type="PROSITE-ProRule" id="PRU00303"/>
    </source>
</evidence>
<evidence type="ECO:0000256" key="4">
    <source>
        <dbReference type="SAM" id="MobiDB-lite"/>
    </source>
</evidence>
<evidence type="ECO:0000269" key="5">
    <source>
    </source>
</evidence>
<evidence type="ECO:0000305" key="6"/>
<dbReference type="EC" id="3.2.1.4"/>
<dbReference type="EMBL" id="M29047">
    <property type="protein sequence ID" value="AAA24893.1"/>
    <property type="molecule type" value="Genomic_DNA"/>
</dbReference>
<dbReference type="EMBL" id="CP001792">
    <property type="protein sequence ID" value="ACX75816.1"/>
    <property type="molecule type" value="Genomic_DNA"/>
</dbReference>
<dbReference type="EMBL" id="CP002158">
    <property type="protein sequence ID" value="ADL25000.1"/>
    <property type="molecule type" value="Genomic_DNA"/>
</dbReference>
<dbReference type="PIR" id="A33598">
    <property type="entry name" value="A33598"/>
</dbReference>
<dbReference type="RefSeq" id="WP_014546871.1">
    <property type="nucleotide sequence ID" value="NC_013410.1"/>
</dbReference>
<dbReference type="SMR" id="P14250"/>
<dbReference type="STRING" id="59374.FSU_2772"/>
<dbReference type="CAZy" id="GH5">
    <property type="family name" value="Glycoside Hydrolase Family 5"/>
</dbReference>
<dbReference type="KEGG" id="fsc:FSU_2772"/>
<dbReference type="KEGG" id="fsu:Fisuc_2230"/>
<dbReference type="PATRIC" id="fig|59374.8.peg.2655"/>
<dbReference type="eggNOG" id="COG2730">
    <property type="taxonomic scope" value="Bacteria"/>
</dbReference>
<dbReference type="HOGENOM" id="CLU_463623_0_0_0"/>
<dbReference type="OrthoDB" id="9800955at2"/>
<dbReference type="Proteomes" id="UP000000517">
    <property type="component" value="Chromosome"/>
</dbReference>
<dbReference type="GO" id="GO:0009986">
    <property type="term" value="C:cell surface"/>
    <property type="evidence" value="ECO:0007669"/>
    <property type="project" value="TreeGrafter"/>
</dbReference>
<dbReference type="GO" id="GO:0005576">
    <property type="term" value="C:extracellular region"/>
    <property type="evidence" value="ECO:0007669"/>
    <property type="project" value="TreeGrafter"/>
</dbReference>
<dbReference type="GO" id="GO:0016020">
    <property type="term" value="C:membrane"/>
    <property type="evidence" value="ECO:0007669"/>
    <property type="project" value="UniProtKB-SubCell"/>
</dbReference>
<dbReference type="GO" id="GO:0008422">
    <property type="term" value="F:beta-glucosidase activity"/>
    <property type="evidence" value="ECO:0007669"/>
    <property type="project" value="TreeGrafter"/>
</dbReference>
<dbReference type="GO" id="GO:0008810">
    <property type="term" value="F:cellulase activity"/>
    <property type="evidence" value="ECO:0007669"/>
    <property type="project" value="UniProtKB-EC"/>
</dbReference>
<dbReference type="GO" id="GO:0030245">
    <property type="term" value="P:cellulose catabolic process"/>
    <property type="evidence" value="ECO:0007669"/>
    <property type="project" value="UniProtKB-KW"/>
</dbReference>
<dbReference type="Gene3D" id="3.20.20.80">
    <property type="entry name" value="Glycosidases"/>
    <property type="match status" value="1"/>
</dbReference>
<dbReference type="InterPro" id="IPR008979">
    <property type="entry name" value="Galactose-bd-like_sf"/>
</dbReference>
<dbReference type="InterPro" id="IPR001547">
    <property type="entry name" value="Glyco_hydro_5"/>
</dbReference>
<dbReference type="InterPro" id="IPR018087">
    <property type="entry name" value="Glyco_hydro_5_CS"/>
</dbReference>
<dbReference type="InterPro" id="IPR017853">
    <property type="entry name" value="Glycoside_hydrolase_SF"/>
</dbReference>
<dbReference type="InterPro" id="IPR050386">
    <property type="entry name" value="Glycosyl_hydrolase_5"/>
</dbReference>
<dbReference type="PANTHER" id="PTHR31297:SF41">
    <property type="entry name" value="ENDOGLUCANASE, PUTATIVE (AFU_ORTHOLOGUE AFUA_5G01830)-RELATED"/>
    <property type="match status" value="1"/>
</dbReference>
<dbReference type="PANTHER" id="PTHR31297">
    <property type="entry name" value="GLUCAN ENDO-1,6-BETA-GLUCOSIDASE B"/>
    <property type="match status" value="1"/>
</dbReference>
<dbReference type="Pfam" id="PF00150">
    <property type="entry name" value="Cellulase"/>
    <property type="match status" value="1"/>
</dbReference>
<dbReference type="SUPFAM" id="SSF51445">
    <property type="entry name" value="(Trans)glycosidases"/>
    <property type="match status" value="1"/>
</dbReference>
<dbReference type="SUPFAM" id="SSF49785">
    <property type="entry name" value="Galactose-binding domain-like"/>
    <property type="match status" value="1"/>
</dbReference>
<dbReference type="PROSITE" id="PS00659">
    <property type="entry name" value="GLYCOSYL_HYDROL_F5"/>
    <property type="match status" value="1"/>
</dbReference>
<dbReference type="PROSITE" id="PS51257">
    <property type="entry name" value="PROKAR_LIPOPROTEIN"/>
    <property type="match status" value="1"/>
</dbReference>
<protein>
    <recommendedName>
        <fullName>Endoglucanase 3</fullName>
        <ecNumber>3.2.1.4</ecNumber>
    </recommendedName>
    <alternativeName>
        <fullName>Cellulase 3</fullName>
    </alternativeName>
    <alternativeName>
        <fullName>Endo-1,4-beta-glucanase 3</fullName>
        <shortName>EG3</shortName>
    </alternativeName>
</protein>
<reference key="1">
    <citation type="journal article" date="1989" name="J. Bacteriol.">
        <title>Structure of the cel-3 gene from Fibrobacter succinogenes S85 and characteristics of the encoded gene product, endoglucanase 3.</title>
        <authorList>
            <person name="McGavin M.J."/>
            <person name="Forsberg C.W."/>
            <person name="Crosby B."/>
            <person name="Bell A.W."/>
            <person name="Dignard D."/>
            <person name="Thomas D.Y."/>
        </authorList>
    </citation>
    <scope>NUCLEOTIDE SEQUENCE [GENOMIC DNA]</scope>
    <scope>PROTEIN SEQUENCE OF 266-287</scope>
</reference>
<reference key="2">
    <citation type="submission" date="2009-10" db="EMBL/GenBank/DDBJ databases">
        <title>Complete sequence of Fibrobacter succinogenes subsp. succinogenes S85.</title>
        <authorList>
            <consortium name="US DOE Joint Genome Institute"/>
            <person name="Lucas S."/>
            <person name="Copeland A."/>
            <person name="Lapidus A."/>
            <person name="Glavina del Rio T."/>
            <person name="Tice H."/>
            <person name="Bruce D."/>
            <person name="Goodwin L."/>
            <person name="Pitluck S."/>
            <person name="Chertkov O."/>
            <person name="Detter J.C."/>
            <person name="Han C."/>
            <person name="Tapia R."/>
            <person name="Larimer F."/>
            <person name="Land M."/>
            <person name="Hauser L."/>
            <person name="Kyrpides N."/>
            <person name="Mikhailova N."/>
            <person name="Weimer P.J."/>
            <person name="Stevenson D.M."/>
            <person name="Boyum J."/>
            <person name="Brumm P.I."/>
            <person name="Mead D."/>
        </authorList>
    </citation>
    <scope>NUCLEOTIDE SEQUENCE [LARGE SCALE GENOMIC DNA]</scope>
    <source>
        <strain>ATCC 19169 / S85</strain>
    </source>
</reference>
<reference key="3">
    <citation type="submission" date="2010-08" db="EMBL/GenBank/DDBJ databases">
        <title>Complete sequence of Fibrobacter succinogenes subsp. succinogenes S85.</title>
        <authorList>
            <person name="Durkin A.S."/>
            <person name="Nelson K.E."/>
            <person name="Morrison M."/>
            <person name="Forsberg C.W."/>
            <person name="Wilson D.B."/>
            <person name="Russell J.B."/>
            <person name="Cann I.K.O."/>
            <person name="Mackie R.I."/>
            <person name="White B.A."/>
        </authorList>
    </citation>
    <scope>NUCLEOTIDE SEQUENCE [LARGE SCALE GENOMIC DNA]</scope>
    <source>
        <strain>ATCC 19169 / S85</strain>
    </source>
</reference>
<gene>
    <name type="primary">cel-3</name>
    <name type="ordered locus">Fisuc_2230</name>
    <name type="ordered locus">FSU_2772</name>
</gene>
<proteinExistence type="evidence at protein level"/>
<feature type="signal peptide" evidence="3">
    <location>
        <begin position="1"/>
        <end position="23"/>
    </location>
</feature>
<feature type="propeptide" id="PRO_0000007861" evidence="5">
    <location>
        <begin position="24"/>
        <end position="265"/>
    </location>
</feature>
<feature type="chain" id="PRO_0000007862" description="Endoglucanase 3">
    <location>
        <begin position="266"/>
        <end position="658"/>
    </location>
</feature>
<feature type="domain" description="CBM11" evidence="2">
    <location>
        <begin position="87"/>
        <end position="277"/>
    </location>
</feature>
<feature type="region of interest" description="Disordered" evidence="4">
    <location>
        <begin position="42"/>
        <end position="83"/>
    </location>
</feature>
<feature type="compositionally biased region" description="Low complexity" evidence="4">
    <location>
        <begin position="45"/>
        <end position="58"/>
    </location>
</feature>
<feature type="active site" description="Proton donor" evidence="1">
    <location>
        <position position="448"/>
    </location>
</feature>
<feature type="active site" description="Nucleophile" evidence="1">
    <location>
        <position position="597"/>
    </location>
</feature>
<feature type="lipid moiety-binding region" description="N-palmitoyl cysteine" evidence="3">
    <location>
        <position position="24"/>
    </location>
</feature>
<feature type="lipid moiety-binding region" description="S-diacylglycerol cysteine" evidence="3">
    <location>
        <position position="24"/>
    </location>
</feature>
<comment type="function">
    <text>Exhibits both endoglucanase and cellobiosidase activities.</text>
</comment>
<comment type="catalytic activity">
    <reaction>
        <text>Endohydrolysis of (1-&gt;4)-beta-D-glucosidic linkages in cellulose, lichenin and cereal beta-D-glucans.</text>
        <dbReference type="EC" id="3.2.1.4"/>
    </reaction>
</comment>
<comment type="subunit">
    <text>Monomer.</text>
</comment>
<comment type="subcellular location">
    <subcellularLocation>
        <location evidence="6">Membrane</location>
        <topology evidence="3">Lipid-anchor</topology>
    </subcellularLocation>
</comment>
<comment type="PTM">
    <text>May be a lipoprotein and may be glycosylated.</text>
</comment>
<comment type="similarity">
    <text evidence="6">Belongs to the glycosyl hydrolase 5 (cellulase A) family.</text>
</comment>
<name>GUN3_FIBSS</name>